<keyword id="KW-0328">Glycosyltransferase</keyword>
<keyword id="KW-0479">Metal-binding</keyword>
<keyword id="KW-0671">Queuosine biosynthesis</keyword>
<keyword id="KW-0808">Transferase</keyword>
<keyword id="KW-0819">tRNA processing</keyword>
<keyword id="KW-0862">Zinc</keyword>
<name>TGT_SALHS</name>
<accession>B4T8P5</accession>
<comment type="function">
    <text evidence="1">Catalyzes the base-exchange of a guanine (G) residue with the queuine precursor 7-aminomethyl-7-deazaguanine (PreQ1) at position 34 (anticodon wobble position) in tRNAs with GU(N) anticodons (tRNA-Asp, -Asn, -His and -Tyr). Catalysis occurs through a double-displacement mechanism. The nucleophile active site attacks the C1' of nucleotide 34 to detach the guanine base from the RNA, forming a covalent enzyme-RNA intermediate. The proton acceptor active site deprotonates the incoming PreQ1, allowing a nucleophilic attack on the C1' of the ribose to form the product. After dissociation, two additional enzymatic reactions on the tRNA convert PreQ1 to queuine (Q), resulting in the hypermodified nucleoside queuosine (7-(((4,5-cis-dihydroxy-2-cyclopenten-1-yl)amino)methyl)-7-deazaguanosine).</text>
</comment>
<comment type="catalytic activity">
    <reaction evidence="1">
        <text>7-aminomethyl-7-carbaguanine + guanosine(34) in tRNA = 7-aminomethyl-7-carbaguanosine(34) in tRNA + guanine</text>
        <dbReference type="Rhea" id="RHEA:24104"/>
        <dbReference type="Rhea" id="RHEA-COMP:10341"/>
        <dbReference type="Rhea" id="RHEA-COMP:10342"/>
        <dbReference type="ChEBI" id="CHEBI:16235"/>
        <dbReference type="ChEBI" id="CHEBI:58703"/>
        <dbReference type="ChEBI" id="CHEBI:74269"/>
        <dbReference type="ChEBI" id="CHEBI:82833"/>
        <dbReference type="EC" id="2.4.2.29"/>
    </reaction>
</comment>
<comment type="cofactor">
    <cofactor evidence="1">
        <name>Zn(2+)</name>
        <dbReference type="ChEBI" id="CHEBI:29105"/>
    </cofactor>
    <text evidence="1">Binds 1 zinc ion per subunit.</text>
</comment>
<comment type="pathway">
    <text evidence="1">tRNA modification; tRNA-queuosine biosynthesis.</text>
</comment>
<comment type="subunit">
    <text evidence="1">Homodimer. Within each dimer, one monomer is responsible for RNA recognition and catalysis, while the other monomer binds to the replacement base PreQ1.</text>
</comment>
<comment type="similarity">
    <text evidence="1">Belongs to the queuine tRNA-ribosyltransferase family.</text>
</comment>
<dbReference type="EC" id="2.4.2.29" evidence="1"/>
<dbReference type="EMBL" id="CP001120">
    <property type="protein sequence ID" value="ACF66259.1"/>
    <property type="molecule type" value="Genomic_DNA"/>
</dbReference>
<dbReference type="RefSeq" id="WP_000667305.1">
    <property type="nucleotide sequence ID" value="NC_011083.1"/>
</dbReference>
<dbReference type="SMR" id="B4T8P5"/>
<dbReference type="KEGG" id="seh:SeHA_C0505"/>
<dbReference type="HOGENOM" id="CLU_022060_0_1_6"/>
<dbReference type="UniPathway" id="UPA00392"/>
<dbReference type="Proteomes" id="UP000001866">
    <property type="component" value="Chromosome"/>
</dbReference>
<dbReference type="GO" id="GO:0005829">
    <property type="term" value="C:cytosol"/>
    <property type="evidence" value="ECO:0007669"/>
    <property type="project" value="TreeGrafter"/>
</dbReference>
<dbReference type="GO" id="GO:0046872">
    <property type="term" value="F:metal ion binding"/>
    <property type="evidence" value="ECO:0007669"/>
    <property type="project" value="UniProtKB-KW"/>
</dbReference>
<dbReference type="GO" id="GO:0008479">
    <property type="term" value="F:tRNA-guanosine(34) queuine transglycosylase activity"/>
    <property type="evidence" value="ECO:0007669"/>
    <property type="project" value="UniProtKB-UniRule"/>
</dbReference>
<dbReference type="GO" id="GO:0008616">
    <property type="term" value="P:queuosine biosynthetic process"/>
    <property type="evidence" value="ECO:0007669"/>
    <property type="project" value="UniProtKB-UniRule"/>
</dbReference>
<dbReference type="GO" id="GO:0002099">
    <property type="term" value="P:tRNA wobble guanine modification"/>
    <property type="evidence" value="ECO:0007669"/>
    <property type="project" value="TreeGrafter"/>
</dbReference>
<dbReference type="GO" id="GO:0101030">
    <property type="term" value="P:tRNA-guanine transglycosylation"/>
    <property type="evidence" value="ECO:0007669"/>
    <property type="project" value="InterPro"/>
</dbReference>
<dbReference type="FunFam" id="3.20.20.105:FF:000001">
    <property type="entry name" value="Queuine tRNA-ribosyltransferase"/>
    <property type="match status" value="1"/>
</dbReference>
<dbReference type="Gene3D" id="3.20.20.105">
    <property type="entry name" value="Queuine tRNA-ribosyltransferase-like"/>
    <property type="match status" value="1"/>
</dbReference>
<dbReference type="HAMAP" id="MF_00168">
    <property type="entry name" value="Q_tRNA_Tgt"/>
    <property type="match status" value="1"/>
</dbReference>
<dbReference type="InterPro" id="IPR050076">
    <property type="entry name" value="ArchSynthase1/Queuine_TRR"/>
</dbReference>
<dbReference type="InterPro" id="IPR004803">
    <property type="entry name" value="TGT"/>
</dbReference>
<dbReference type="InterPro" id="IPR036511">
    <property type="entry name" value="TGT-like_sf"/>
</dbReference>
<dbReference type="InterPro" id="IPR002616">
    <property type="entry name" value="tRNA_ribo_trans-like"/>
</dbReference>
<dbReference type="NCBIfam" id="TIGR00430">
    <property type="entry name" value="Q_tRNA_tgt"/>
    <property type="match status" value="1"/>
</dbReference>
<dbReference type="NCBIfam" id="TIGR00449">
    <property type="entry name" value="tgt_general"/>
    <property type="match status" value="1"/>
</dbReference>
<dbReference type="PANTHER" id="PTHR46499">
    <property type="entry name" value="QUEUINE TRNA-RIBOSYLTRANSFERASE"/>
    <property type="match status" value="1"/>
</dbReference>
<dbReference type="PANTHER" id="PTHR46499:SF1">
    <property type="entry name" value="QUEUINE TRNA-RIBOSYLTRANSFERASE"/>
    <property type="match status" value="1"/>
</dbReference>
<dbReference type="Pfam" id="PF01702">
    <property type="entry name" value="TGT"/>
    <property type="match status" value="1"/>
</dbReference>
<dbReference type="SUPFAM" id="SSF51713">
    <property type="entry name" value="tRNA-guanine transglycosylase"/>
    <property type="match status" value="1"/>
</dbReference>
<reference key="1">
    <citation type="journal article" date="2011" name="J. Bacteriol.">
        <title>Comparative genomics of 28 Salmonella enterica isolates: evidence for CRISPR-mediated adaptive sublineage evolution.</title>
        <authorList>
            <person name="Fricke W.F."/>
            <person name="Mammel M.K."/>
            <person name="McDermott P.F."/>
            <person name="Tartera C."/>
            <person name="White D.G."/>
            <person name="Leclerc J.E."/>
            <person name="Ravel J."/>
            <person name="Cebula T.A."/>
        </authorList>
    </citation>
    <scope>NUCLEOTIDE SEQUENCE [LARGE SCALE GENOMIC DNA]</scope>
    <source>
        <strain>SL476</strain>
    </source>
</reference>
<gene>
    <name evidence="1" type="primary">tgt</name>
    <name type="ordered locus">SeHA_C0505</name>
</gene>
<sequence>MKFELDTTDGRARRGRLVFDRGVVETPAFMPVGTYGTVKGMTPEEVEATGAQIILGNTFHLWLRPGQEIMKLHGDLHDFMQWKGPILTDSGGFQVFSLGDIRKITEQGVHFRNPINGDPIFLDPEKSMEIQYDLGSDIVMIFDECTPYPADWDYAKRSMEMSLRWAKRSRDRFDSLGNKNALFGIIQGSVYEDLRDISVKGLVEIGFDGYAVGGLAVGEPKADMHRILEHVCPQIPADKPRYLMGVGKPEDLVEGVRRGIDMFDCVMPTRNARNGHLFVTDGVVKIRNAKHKSDTSPLDAECDCYTCRNYSRAYLHHLDRCNEILGARLNTIHNLRYYQRLMAGLRKAIEEGKLESFVTEFYQRQGRPVPPLNVD</sequence>
<proteinExistence type="inferred from homology"/>
<protein>
    <recommendedName>
        <fullName evidence="1">Queuine tRNA-ribosyltransferase</fullName>
        <ecNumber evidence="1">2.4.2.29</ecNumber>
    </recommendedName>
    <alternativeName>
        <fullName evidence="1">Guanine insertion enzyme</fullName>
    </alternativeName>
    <alternativeName>
        <fullName evidence="1">tRNA-guanine transglycosylase</fullName>
    </alternativeName>
</protein>
<organism>
    <name type="scientific">Salmonella heidelberg (strain SL476)</name>
    <dbReference type="NCBI Taxonomy" id="454169"/>
    <lineage>
        <taxon>Bacteria</taxon>
        <taxon>Pseudomonadati</taxon>
        <taxon>Pseudomonadota</taxon>
        <taxon>Gammaproteobacteria</taxon>
        <taxon>Enterobacterales</taxon>
        <taxon>Enterobacteriaceae</taxon>
        <taxon>Salmonella</taxon>
    </lineage>
</organism>
<feature type="chain" id="PRO_1000097561" description="Queuine tRNA-ribosyltransferase">
    <location>
        <begin position="1"/>
        <end position="375"/>
    </location>
</feature>
<feature type="region of interest" description="RNA binding" evidence="1">
    <location>
        <begin position="245"/>
        <end position="251"/>
    </location>
</feature>
<feature type="region of interest" description="RNA binding; important for wobble base 34 recognition" evidence="1">
    <location>
        <begin position="269"/>
        <end position="273"/>
    </location>
</feature>
<feature type="active site" description="Proton acceptor" evidence="1">
    <location>
        <position position="89"/>
    </location>
</feature>
<feature type="active site" description="Nucleophile" evidence="1">
    <location>
        <position position="264"/>
    </location>
</feature>
<feature type="binding site" evidence="1">
    <location>
        <begin position="89"/>
        <end position="93"/>
    </location>
    <ligand>
        <name>substrate</name>
    </ligand>
</feature>
<feature type="binding site" evidence="1">
    <location>
        <position position="143"/>
    </location>
    <ligand>
        <name>substrate</name>
    </ligand>
</feature>
<feature type="binding site" evidence="1">
    <location>
        <position position="187"/>
    </location>
    <ligand>
        <name>substrate</name>
    </ligand>
</feature>
<feature type="binding site" evidence="1">
    <location>
        <position position="214"/>
    </location>
    <ligand>
        <name>substrate</name>
    </ligand>
</feature>
<feature type="binding site" evidence="1">
    <location>
        <position position="302"/>
    </location>
    <ligand>
        <name>Zn(2+)</name>
        <dbReference type="ChEBI" id="CHEBI:29105"/>
    </ligand>
</feature>
<feature type="binding site" evidence="1">
    <location>
        <position position="304"/>
    </location>
    <ligand>
        <name>Zn(2+)</name>
        <dbReference type="ChEBI" id="CHEBI:29105"/>
    </ligand>
</feature>
<feature type="binding site" evidence="1">
    <location>
        <position position="307"/>
    </location>
    <ligand>
        <name>Zn(2+)</name>
        <dbReference type="ChEBI" id="CHEBI:29105"/>
    </ligand>
</feature>
<feature type="binding site" evidence="1">
    <location>
        <position position="333"/>
    </location>
    <ligand>
        <name>Zn(2+)</name>
        <dbReference type="ChEBI" id="CHEBI:29105"/>
    </ligand>
</feature>
<evidence type="ECO:0000255" key="1">
    <source>
        <dbReference type="HAMAP-Rule" id="MF_00168"/>
    </source>
</evidence>